<reference key="1">
    <citation type="journal article" date="2003" name="Genome Res.">
        <title>Tropheryma whipplei twist: a human pathogenic Actinobacteria with a reduced genome.</title>
        <authorList>
            <person name="Raoult D."/>
            <person name="Ogata H."/>
            <person name="Audic S."/>
            <person name="Robert C."/>
            <person name="Suhre K."/>
            <person name="Drancourt M."/>
            <person name="Claverie J.-M."/>
        </authorList>
    </citation>
    <scope>NUCLEOTIDE SEQUENCE [LARGE SCALE GENOMIC DNA]</scope>
    <source>
        <strain>Twist</strain>
    </source>
</reference>
<name>RL34_TROWT</name>
<evidence type="ECO:0000255" key="1">
    <source>
        <dbReference type="HAMAP-Rule" id="MF_00391"/>
    </source>
</evidence>
<evidence type="ECO:0000256" key="2">
    <source>
        <dbReference type="SAM" id="MobiDB-lite"/>
    </source>
</evidence>
<evidence type="ECO:0000305" key="3"/>
<accession>Q83FD9</accession>
<sequence>MSKRTYQPNKRKRLKTHGFRSRMSTASGRRIISCRRRKNRETLTA</sequence>
<comment type="similarity">
    <text evidence="1">Belongs to the bacterial ribosomal protein bL34 family.</text>
</comment>
<comment type="sequence caution" evidence="3">
    <conflict type="erroneous initiation">
        <sequence resource="EMBL-CDS" id="AAO44905"/>
    </conflict>
</comment>
<organism>
    <name type="scientific">Tropheryma whipplei (strain Twist)</name>
    <name type="common">Whipple's bacillus</name>
    <dbReference type="NCBI Taxonomy" id="203267"/>
    <lineage>
        <taxon>Bacteria</taxon>
        <taxon>Bacillati</taxon>
        <taxon>Actinomycetota</taxon>
        <taxon>Actinomycetes</taxon>
        <taxon>Micrococcales</taxon>
        <taxon>Tropherymataceae</taxon>
        <taxon>Tropheryma</taxon>
    </lineage>
</organism>
<protein>
    <recommendedName>
        <fullName evidence="1">Large ribosomal subunit protein bL34</fullName>
    </recommendedName>
    <alternativeName>
        <fullName evidence="3">50S ribosomal protein L34</fullName>
    </alternativeName>
</protein>
<dbReference type="EMBL" id="AE014184">
    <property type="protein sequence ID" value="AAO44905.1"/>
    <property type="status" value="ALT_INIT"/>
    <property type="molecule type" value="Genomic_DNA"/>
</dbReference>
<dbReference type="SMR" id="Q83FD9"/>
<dbReference type="STRING" id="203267.TWT_808"/>
<dbReference type="KEGG" id="twh:TWT_808"/>
<dbReference type="eggNOG" id="COG0230">
    <property type="taxonomic scope" value="Bacteria"/>
</dbReference>
<dbReference type="HOGENOM" id="CLU_129938_2_0_11"/>
<dbReference type="Proteomes" id="UP000002200">
    <property type="component" value="Chromosome"/>
</dbReference>
<dbReference type="GO" id="GO:1990904">
    <property type="term" value="C:ribonucleoprotein complex"/>
    <property type="evidence" value="ECO:0007669"/>
    <property type="project" value="UniProtKB-KW"/>
</dbReference>
<dbReference type="GO" id="GO:0005840">
    <property type="term" value="C:ribosome"/>
    <property type="evidence" value="ECO:0007669"/>
    <property type="project" value="UniProtKB-KW"/>
</dbReference>
<dbReference type="GO" id="GO:0003735">
    <property type="term" value="F:structural constituent of ribosome"/>
    <property type="evidence" value="ECO:0007669"/>
    <property type="project" value="InterPro"/>
</dbReference>
<dbReference type="GO" id="GO:0006412">
    <property type="term" value="P:translation"/>
    <property type="evidence" value="ECO:0007669"/>
    <property type="project" value="UniProtKB-UniRule"/>
</dbReference>
<dbReference type="FunFam" id="1.10.287.3980:FF:000001">
    <property type="entry name" value="Mitochondrial ribosomal protein L34"/>
    <property type="match status" value="1"/>
</dbReference>
<dbReference type="Gene3D" id="1.10.287.3980">
    <property type="match status" value="1"/>
</dbReference>
<dbReference type="HAMAP" id="MF_00391">
    <property type="entry name" value="Ribosomal_bL34"/>
    <property type="match status" value="1"/>
</dbReference>
<dbReference type="InterPro" id="IPR000271">
    <property type="entry name" value="Ribosomal_bL34"/>
</dbReference>
<dbReference type="InterPro" id="IPR020939">
    <property type="entry name" value="Ribosomal_bL34_CS"/>
</dbReference>
<dbReference type="NCBIfam" id="TIGR01030">
    <property type="entry name" value="rpmH_bact"/>
    <property type="match status" value="1"/>
</dbReference>
<dbReference type="PANTHER" id="PTHR14503:SF4">
    <property type="entry name" value="LARGE RIBOSOMAL SUBUNIT PROTEIN BL34M"/>
    <property type="match status" value="1"/>
</dbReference>
<dbReference type="PANTHER" id="PTHR14503">
    <property type="entry name" value="MITOCHONDRIAL RIBOSOMAL PROTEIN 34 FAMILY MEMBER"/>
    <property type="match status" value="1"/>
</dbReference>
<dbReference type="Pfam" id="PF00468">
    <property type="entry name" value="Ribosomal_L34"/>
    <property type="match status" value="1"/>
</dbReference>
<dbReference type="PROSITE" id="PS00784">
    <property type="entry name" value="RIBOSOMAL_L34"/>
    <property type="match status" value="1"/>
</dbReference>
<proteinExistence type="inferred from homology"/>
<keyword id="KW-1185">Reference proteome</keyword>
<keyword id="KW-0687">Ribonucleoprotein</keyword>
<keyword id="KW-0689">Ribosomal protein</keyword>
<gene>
    <name evidence="1" type="primary">rpmH</name>
    <name type="ordered locus">TWT_808</name>
</gene>
<feature type="chain" id="PRO_0000187497" description="Large ribosomal subunit protein bL34">
    <location>
        <begin position="1"/>
        <end position="45"/>
    </location>
</feature>
<feature type="region of interest" description="Disordered" evidence="2">
    <location>
        <begin position="1"/>
        <end position="45"/>
    </location>
</feature>
<feature type="compositionally biased region" description="Basic residues" evidence="2">
    <location>
        <begin position="1"/>
        <end position="20"/>
    </location>
</feature>